<protein>
    <recommendedName>
        <fullName>Transketolase</fullName>
        <shortName>TK</shortName>
        <ecNumber>2.2.1.1</ecNumber>
    </recommendedName>
    <alternativeName>
        <fullName>P68</fullName>
    </alternativeName>
</protein>
<comment type="function">
    <text evidence="1">Catalyzes the transfer of a two-carbon ketol group from a ketose donor to an aldose acceptor, via a covalent intermediate with the cofactor thiamine pyrophosphate.</text>
</comment>
<comment type="catalytic activity">
    <reaction>
        <text>D-sedoheptulose 7-phosphate + D-glyceraldehyde 3-phosphate = aldehydo-D-ribose 5-phosphate + D-xylulose 5-phosphate</text>
        <dbReference type="Rhea" id="RHEA:10508"/>
        <dbReference type="ChEBI" id="CHEBI:57483"/>
        <dbReference type="ChEBI" id="CHEBI:57737"/>
        <dbReference type="ChEBI" id="CHEBI:58273"/>
        <dbReference type="ChEBI" id="CHEBI:59776"/>
        <dbReference type="EC" id="2.2.1.1"/>
    </reaction>
</comment>
<comment type="cofactor">
    <cofactor evidence="1">
        <name>Mg(2+)</name>
        <dbReference type="ChEBI" id="CHEBI:18420"/>
    </cofactor>
    <cofactor evidence="1">
        <name>Ca(2+)</name>
        <dbReference type="ChEBI" id="CHEBI:29108"/>
    </cofactor>
    <cofactor evidence="1">
        <name>Mn(2+)</name>
        <dbReference type="ChEBI" id="CHEBI:29035"/>
    </cofactor>
    <cofactor evidence="1">
        <name>Co(2+)</name>
        <dbReference type="ChEBI" id="CHEBI:48828"/>
    </cofactor>
    <text evidence="1">Binds 1 Mg(2+) ion per subunit. Can also utilize other divalent metal cations, such as Ca(2+), Mn(2+) and Co(2+).</text>
</comment>
<comment type="cofactor">
    <cofactor evidence="1">
        <name>thiamine diphosphate</name>
        <dbReference type="ChEBI" id="CHEBI:58937"/>
    </cofactor>
    <text evidence="1">Binds 1 thiamine pyrophosphate per subunit.</text>
</comment>
<comment type="subunit">
    <text evidence="1">Homodimer.</text>
</comment>
<comment type="similarity">
    <text evidence="4">Belongs to the transketolase family.</text>
</comment>
<accession>P40142</accession>
<accession>Q3U7Y1</accession>
<accession>Q3UK62</accession>
<accession>Q545A1</accession>
<accession>Q9ESA0</accession>
<evidence type="ECO:0000250" key="1"/>
<evidence type="ECO:0000250" key="2">
    <source>
        <dbReference type="UniProtKB" id="P29401"/>
    </source>
</evidence>
<evidence type="ECO:0000250" key="3">
    <source>
        <dbReference type="UniProtKB" id="P50137"/>
    </source>
</evidence>
<evidence type="ECO:0000305" key="4"/>
<evidence type="ECO:0007744" key="5">
    <source>
    </source>
</evidence>
<evidence type="ECO:0007744" key="6">
    <source>
    </source>
</evidence>
<evidence type="ECO:0007744" key="7">
    <source>
    </source>
</evidence>
<dbReference type="EC" id="2.2.1.1"/>
<dbReference type="EMBL" id="U05809">
    <property type="protein sequence ID" value="AAC52443.1"/>
    <property type="molecule type" value="mRNA"/>
</dbReference>
<dbReference type="EMBL" id="AK002627">
    <property type="protein sequence ID" value="BAB22242.1"/>
    <property type="molecule type" value="mRNA"/>
</dbReference>
<dbReference type="EMBL" id="AK012794">
    <property type="protein sequence ID" value="BAB28474.1"/>
    <property type="molecule type" value="mRNA"/>
</dbReference>
<dbReference type="EMBL" id="AK030446">
    <property type="protein sequence ID" value="BAC26968.1"/>
    <property type="molecule type" value="mRNA"/>
</dbReference>
<dbReference type="EMBL" id="AK140965">
    <property type="protein sequence ID" value="BAE24531.1"/>
    <property type="molecule type" value="mRNA"/>
</dbReference>
<dbReference type="EMBL" id="AK144146">
    <property type="protein sequence ID" value="BAE25728.1"/>
    <property type="molecule type" value="mRNA"/>
</dbReference>
<dbReference type="EMBL" id="AK146157">
    <property type="protein sequence ID" value="BAE26940.1"/>
    <property type="molecule type" value="mRNA"/>
</dbReference>
<dbReference type="EMBL" id="AK150139">
    <property type="protein sequence ID" value="BAE29335.1"/>
    <property type="molecule type" value="mRNA"/>
</dbReference>
<dbReference type="EMBL" id="AK150769">
    <property type="protein sequence ID" value="BAE29835.1"/>
    <property type="molecule type" value="mRNA"/>
</dbReference>
<dbReference type="EMBL" id="AK150844">
    <property type="protein sequence ID" value="BAE29902.1"/>
    <property type="molecule type" value="mRNA"/>
</dbReference>
<dbReference type="EMBL" id="AK150856">
    <property type="protein sequence ID" value="BAE29911.1"/>
    <property type="molecule type" value="mRNA"/>
</dbReference>
<dbReference type="EMBL" id="AK152460">
    <property type="protein sequence ID" value="BAE31238.1"/>
    <property type="molecule type" value="mRNA"/>
</dbReference>
<dbReference type="EMBL" id="AK159922">
    <property type="protein sequence ID" value="BAE35484.1"/>
    <property type="molecule type" value="mRNA"/>
</dbReference>
<dbReference type="EMBL" id="AK167084">
    <property type="protein sequence ID" value="BAE39242.1"/>
    <property type="molecule type" value="mRNA"/>
</dbReference>
<dbReference type="EMBL" id="BC055336">
    <property type="protein sequence ID" value="AAH55336.1"/>
    <property type="molecule type" value="mRNA"/>
</dbReference>
<dbReference type="EMBL" id="U90889">
    <property type="protein sequence ID" value="AAC53570.1"/>
    <property type="molecule type" value="Genomic_DNA"/>
</dbReference>
<dbReference type="EMBL" id="AF195533">
    <property type="protein sequence ID" value="AAG28459.1"/>
    <property type="molecule type" value="mRNA"/>
</dbReference>
<dbReference type="CCDS" id="CCDS26894.1"/>
<dbReference type="RefSeq" id="NP_033414.1">
    <property type="nucleotide sequence ID" value="NM_009388.6"/>
</dbReference>
<dbReference type="SMR" id="P40142"/>
<dbReference type="BioGRID" id="204213">
    <property type="interactions" value="26"/>
</dbReference>
<dbReference type="FunCoup" id="P40142">
    <property type="interactions" value="1931"/>
</dbReference>
<dbReference type="IntAct" id="P40142">
    <property type="interactions" value="12"/>
</dbReference>
<dbReference type="MINT" id="P40142"/>
<dbReference type="STRING" id="10090.ENSMUSP00000022529"/>
<dbReference type="GlyGen" id="P40142">
    <property type="glycosylation" value="2 sites, 1 N-linked glycan (1 site), 1 O-linked glycan (1 site)"/>
</dbReference>
<dbReference type="iPTMnet" id="P40142"/>
<dbReference type="MetOSite" id="P40142"/>
<dbReference type="PhosphoSitePlus" id="P40142"/>
<dbReference type="SwissPalm" id="P40142"/>
<dbReference type="REPRODUCTION-2DPAGE" id="P40142"/>
<dbReference type="CPTAC" id="non-CPTAC-3621"/>
<dbReference type="jPOST" id="P40142"/>
<dbReference type="PaxDb" id="10090-ENSMUSP00000022529"/>
<dbReference type="PeptideAtlas" id="P40142"/>
<dbReference type="ProteomicsDB" id="258891"/>
<dbReference type="Pumba" id="P40142"/>
<dbReference type="Antibodypedia" id="31391">
    <property type="antibodies" value="267 antibodies from 30 providers"/>
</dbReference>
<dbReference type="DNASU" id="21881"/>
<dbReference type="Ensembl" id="ENSMUST00000022529.8">
    <property type="protein sequence ID" value="ENSMUSP00000022529.7"/>
    <property type="gene ID" value="ENSMUSG00000021957.8"/>
</dbReference>
<dbReference type="GeneID" id="21881"/>
<dbReference type="KEGG" id="mmu:21881"/>
<dbReference type="UCSC" id="uc007svc.2">
    <property type="organism name" value="mouse"/>
</dbReference>
<dbReference type="AGR" id="MGI:105992"/>
<dbReference type="CTD" id="7086"/>
<dbReference type="MGI" id="MGI:105992">
    <property type="gene designation" value="Tkt"/>
</dbReference>
<dbReference type="VEuPathDB" id="HostDB:ENSMUSG00000021957"/>
<dbReference type="eggNOG" id="KOG0523">
    <property type="taxonomic scope" value="Eukaryota"/>
</dbReference>
<dbReference type="GeneTree" id="ENSGT00940000155552"/>
<dbReference type="HOGENOM" id="CLU_009227_3_0_1"/>
<dbReference type="InParanoid" id="P40142"/>
<dbReference type="OMA" id="VYCLCGD"/>
<dbReference type="OrthoDB" id="21345at9989"/>
<dbReference type="PhylomeDB" id="P40142"/>
<dbReference type="TreeFam" id="TF313097"/>
<dbReference type="BRENDA" id="2.2.1.1">
    <property type="organism ID" value="3474"/>
</dbReference>
<dbReference type="Reactome" id="R-MMU-163754">
    <property type="pathway name" value="Insulin effects increased synthesis of Xylulose-5-Phosphate"/>
</dbReference>
<dbReference type="Reactome" id="R-MMU-71336">
    <property type="pathway name" value="Pentose phosphate pathway"/>
</dbReference>
<dbReference type="BioGRID-ORCS" id="21881">
    <property type="hits" value="18 hits in 80 CRISPR screens"/>
</dbReference>
<dbReference type="ChiTaRS" id="Tkt">
    <property type="organism name" value="mouse"/>
</dbReference>
<dbReference type="PRO" id="PR:P40142"/>
<dbReference type="Proteomes" id="UP000000589">
    <property type="component" value="Chromosome 14"/>
</dbReference>
<dbReference type="RNAct" id="P40142">
    <property type="molecule type" value="protein"/>
</dbReference>
<dbReference type="Bgee" id="ENSMUSG00000021957">
    <property type="expression patterns" value="Expressed in substantia propria of cornea and 279 other cell types or tissues"/>
</dbReference>
<dbReference type="ExpressionAtlas" id="P40142">
    <property type="expression patterns" value="baseline and differential"/>
</dbReference>
<dbReference type="GO" id="GO:0005829">
    <property type="term" value="C:cytosol"/>
    <property type="evidence" value="ECO:0000314"/>
    <property type="project" value="MGI"/>
</dbReference>
<dbReference type="GO" id="GO:0043209">
    <property type="term" value="C:myelin sheath"/>
    <property type="evidence" value="ECO:0007005"/>
    <property type="project" value="UniProtKB"/>
</dbReference>
<dbReference type="GO" id="GO:0016604">
    <property type="term" value="C:nuclear body"/>
    <property type="evidence" value="ECO:0007669"/>
    <property type="project" value="Ensembl"/>
</dbReference>
<dbReference type="GO" id="GO:0005509">
    <property type="term" value="F:calcium ion binding"/>
    <property type="evidence" value="ECO:0007669"/>
    <property type="project" value="Ensembl"/>
</dbReference>
<dbReference type="GO" id="GO:0000287">
    <property type="term" value="F:magnesium ion binding"/>
    <property type="evidence" value="ECO:0007669"/>
    <property type="project" value="Ensembl"/>
</dbReference>
<dbReference type="GO" id="GO:0042803">
    <property type="term" value="F:protein homodimerization activity"/>
    <property type="evidence" value="ECO:0007669"/>
    <property type="project" value="Ensembl"/>
</dbReference>
<dbReference type="GO" id="GO:0004802">
    <property type="term" value="F:transketolase activity"/>
    <property type="evidence" value="ECO:0000314"/>
    <property type="project" value="MGI"/>
</dbReference>
<dbReference type="GO" id="GO:0046166">
    <property type="term" value="P:glyceraldehyde-3-phosphate biosynthetic process"/>
    <property type="evidence" value="ECO:0007669"/>
    <property type="project" value="Ensembl"/>
</dbReference>
<dbReference type="GO" id="GO:0006098">
    <property type="term" value="P:pentose-phosphate shunt"/>
    <property type="evidence" value="ECO:0000314"/>
    <property type="project" value="MGI"/>
</dbReference>
<dbReference type="GO" id="GO:0009052">
    <property type="term" value="P:pentose-phosphate shunt, non-oxidative branch"/>
    <property type="evidence" value="ECO:0000315"/>
    <property type="project" value="FlyBase"/>
</dbReference>
<dbReference type="GO" id="GO:0040008">
    <property type="term" value="P:regulation of growth"/>
    <property type="evidence" value="ECO:0000315"/>
    <property type="project" value="MGI"/>
</dbReference>
<dbReference type="GO" id="GO:1901159">
    <property type="term" value="P:xylulose 5-phosphate biosynthetic process"/>
    <property type="evidence" value="ECO:0000314"/>
    <property type="project" value="MGI"/>
</dbReference>
<dbReference type="CDD" id="cd07033">
    <property type="entry name" value="TPP_PYR_DXS_TK_like"/>
    <property type="match status" value="1"/>
</dbReference>
<dbReference type="CDD" id="cd02012">
    <property type="entry name" value="TPP_TK"/>
    <property type="match status" value="1"/>
</dbReference>
<dbReference type="FunFam" id="3.40.50.970:FF:000028">
    <property type="entry name" value="Transketolase isoform 1"/>
    <property type="match status" value="1"/>
</dbReference>
<dbReference type="FunFam" id="3.40.50.970:FF:000033">
    <property type="entry name" value="Transketolase isoform 1"/>
    <property type="match status" value="1"/>
</dbReference>
<dbReference type="FunFam" id="3.40.50.920:FF:000008">
    <property type="entry name" value="transketolase isoform X2"/>
    <property type="match status" value="1"/>
</dbReference>
<dbReference type="Gene3D" id="3.40.50.920">
    <property type="match status" value="1"/>
</dbReference>
<dbReference type="Gene3D" id="3.40.50.970">
    <property type="match status" value="2"/>
</dbReference>
<dbReference type="InterPro" id="IPR029061">
    <property type="entry name" value="THDP-binding"/>
</dbReference>
<dbReference type="InterPro" id="IPR009014">
    <property type="entry name" value="Transketo_C/PFOR_II"/>
</dbReference>
<dbReference type="InterPro" id="IPR051424">
    <property type="entry name" value="Transketolase-like"/>
</dbReference>
<dbReference type="InterPro" id="IPR005475">
    <property type="entry name" value="Transketolase-like_Pyr-bd"/>
</dbReference>
<dbReference type="InterPro" id="IPR020826">
    <property type="entry name" value="Transketolase_BS"/>
</dbReference>
<dbReference type="InterPro" id="IPR033248">
    <property type="entry name" value="Transketolase_C"/>
</dbReference>
<dbReference type="InterPro" id="IPR049557">
    <property type="entry name" value="Transketolase_CS"/>
</dbReference>
<dbReference type="InterPro" id="IPR005474">
    <property type="entry name" value="Transketolase_N"/>
</dbReference>
<dbReference type="NCBIfam" id="NF004559">
    <property type="entry name" value="PRK05899.2-5"/>
    <property type="match status" value="1"/>
</dbReference>
<dbReference type="PANTHER" id="PTHR43195">
    <property type="entry name" value="TRANSKETOLASE"/>
    <property type="match status" value="1"/>
</dbReference>
<dbReference type="PANTHER" id="PTHR43195:SF3">
    <property type="entry name" value="TRANSKETOLASE"/>
    <property type="match status" value="1"/>
</dbReference>
<dbReference type="Pfam" id="PF02779">
    <property type="entry name" value="Transket_pyr"/>
    <property type="match status" value="1"/>
</dbReference>
<dbReference type="Pfam" id="PF02780">
    <property type="entry name" value="Transketolase_C"/>
    <property type="match status" value="1"/>
</dbReference>
<dbReference type="Pfam" id="PF00456">
    <property type="entry name" value="Transketolase_N"/>
    <property type="match status" value="1"/>
</dbReference>
<dbReference type="SMART" id="SM00861">
    <property type="entry name" value="Transket_pyr"/>
    <property type="match status" value="1"/>
</dbReference>
<dbReference type="SUPFAM" id="SSF52518">
    <property type="entry name" value="Thiamin diphosphate-binding fold (THDP-binding)"/>
    <property type="match status" value="2"/>
</dbReference>
<dbReference type="SUPFAM" id="SSF52922">
    <property type="entry name" value="TK C-terminal domain-like"/>
    <property type="match status" value="1"/>
</dbReference>
<dbReference type="PROSITE" id="PS00801">
    <property type="entry name" value="TRANSKETOLASE_1"/>
    <property type="match status" value="1"/>
</dbReference>
<dbReference type="PROSITE" id="PS00802">
    <property type="entry name" value="TRANSKETOLASE_2"/>
    <property type="match status" value="1"/>
</dbReference>
<sequence>MEGYHKPDQQKLQALKDTANRLRISSIQATTAAGSGHPTSCCSAAEIMAVLFFHTMRYKALDPRNPHNDRFVLSKGHAAPILYAVWAEAGFLPEAELLNLRKISSDLDGHPVPKQAFTDVATGSLGQGLGAACGMAYTGKYFDKASYRVYCMLGDGEVSEGSVWEAMAFAGIYKLDNLVAIFDINRLGQSDPAPLQHQVDIYQKRCEAFGWHTIIVDGHSVEELCKAFGQAKHQPTAIIAKTFKGRGITGIEDKEAWHGKPLPKNMAEQIIQEIYSQVQSKKKILATPPQEDAPSVDIANIRMPTPPSYKVGDKIATRKAYGLALAKLGHASDRIIALDGDTKNSTFSELFKKEHPDRFIECYIAEQNMVSIAVGCATRDRTVPFCSTFAAFFTRAFDQIRMAAISESNINLCGSHCGVSIGEDGPSQMALEDLAMFRSVPMSTVFYPSDGVATEKAVELAANTKGICFIRTSRPENAIIYSNNEDFQVGQAKVVLKSKDDQVTVIGAGVTLHEALAAAESLKKDKISIRVLDPFTIKPLDRKLILDSARATKGRILTVEDHYYEGGIGEAVSAAVVGEPGVTVTRLAVSQVPRSGKPAELLKMFGIDKDAIVQAVKGLVTKG</sequence>
<proteinExistence type="evidence at protein level"/>
<organism>
    <name type="scientific">Mus musculus</name>
    <name type="common">Mouse</name>
    <dbReference type="NCBI Taxonomy" id="10090"/>
    <lineage>
        <taxon>Eukaryota</taxon>
        <taxon>Metazoa</taxon>
        <taxon>Chordata</taxon>
        <taxon>Craniata</taxon>
        <taxon>Vertebrata</taxon>
        <taxon>Euteleostomi</taxon>
        <taxon>Mammalia</taxon>
        <taxon>Eutheria</taxon>
        <taxon>Euarchontoglires</taxon>
        <taxon>Glires</taxon>
        <taxon>Rodentia</taxon>
        <taxon>Myomorpha</taxon>
        <taxon>Muroidea</taxon>
        <taxon>Muridae</taxon>
        <taxon>Murinae</taxon>
        <taxon>Mus</taxon>
        <taxon>Mus</taxon>
    </lineage>
</organism>
<reference key="1">
    <citation type="journal article" date="1996" name="J. Biol. Chem.">
        <title>Amplification of the transketolase gene in desensitization-resistant mutant Y1 mouse adrenocortical tumor cells.</title>
        <authorList>
            <person name="Schimmer B.P."/>
            <person name="Tsao J."/>
            <person name="Czerwinski W."/>
        </authorList>
    </citation>
    <scope>NUCLEOTIDE SEQUENCE [MRNA]</scope>
    <source>
        <strain>LAF1</strain>
    </source>
</reference>
<reference key="2">
    <citation type="journal article" date="2005" name="Science">
        <title>The transcriptional landscape of the mammalian genome.</title>
        <authorList>
            <person name="Carninci P."/>
            <person name="Kasukawa T."/>
            <person name="Katayama S."/>
            <person name="Gough J."/>
            <person name="Frith M.C."/>
            <person name="Maeda N."/>
            <person name="Oyama R."/>
            <person name="Ravasi T."/>
            <person name="Lenhard B."/>
            <person name="Wells C."/>
            <person name="Kodzius R."/>
            <person name="Shimokawa K."/>
            <person name="Bajic V.B."/>
            <person name="Brenner S.E."/>
            <person name="Batalov S."/>
            <person name="Forrest A.R."/>
            <person name="Zavolan M."/>
            <person name="Davis M.J."/>
            <person name="Wilming L.G."/>
            <person name="Aidinis V."/>
            <person name="Allen J.E."/>
            <person name="Ambesi-Impiombato A."/>
            <person name="Apweiler R."/>
            <person name="Aturaliya R.N."/>
            <person name="Bailey T.L."/>
            <person name="Bansal M."/>
            <person name="Baxter L."/>
            <person name="Beisel K.W."/>
            <person name="Bersano T."/>
            <person name="Bono H."/>
            <person name="Chalk A.M."/>
            <person name="Chiu K.P."/>
            <person name="Choudhary V."/>
            <person name="Christoffels A."/>
            <person name="Clutterbuck D.R."/>
            <person name="Crowe M.L."/>
            <person name="Dalla E."/>
            <person name="Dalrymple B.P."/>
            <person name="de Bono B."/>
            <person name="Della Gatta G."/>
            <person name="di Bernardo D."/>
            <person name="Down T."/>
            <person name="Engstrom P."/>
            <person name="Fagiolini M."/>
            <person name="Faulkner G."/>
            <person name="Fletcher C.F."/>
            <person name="Fukushima T."/>
            <person name="Furuno M."/>
            <person name="Futaki S."/>
            <person name="Gariboldi M."/>
            <person name="Georgii-Hemming P."/>
            <person name="Gingeras T.R."/>
            <person name="Gojobori T."/>
            <person name="Green R.E."/>
            <person name="Gustincich S."/>
            <person name="Harbers M."/>
            <person name="Hayashi Y."/>
            <person name="Hensch T.K."/>
            <person name="Hirokawa N."/>
            <person name="Hill D."/>
            <person name="Huminiecki L."/>
            <person name="Iacono M."/>
            <person name="Ikeo K."/>
            <person name="Iwama A."/>
            <person name="Ishikawa T."/>
            <person name="Jakt M."/>
            <person name="Kanapin A."/>
            <person name="Katoh M."/>
            <person name="Kawasawa Y."/>
            <person name="Kelso J."/>
            <person name="Kitamura H."/>
            <person name="Kitano H."/>
            <person name="Kollias G."/>
            <person name="Krishnan S.P."/>
            <person name="Kruger A."/>
            <person name="Kummerfeld S.K."/>
            <person name="Kurochkin I.V."/>
            <person name="Lareau L.F."/>
            <person name="Lazarevic D."/>
            <person name="Lipovich L."/>
            <person name="Liu J."/>
            <person name="Liuni S."/>
            <person name="McWilliam S."/>
            <person name="Madan Babu M."/>
            <person name="Madera M."/>
            <person name="Marchionni L."/>
            <person name="Matsuda H."/>
            <person name="Matsuzawa S."/>
            <person name="Miki H."/>
            <person name="Mignone F."/>
            <person name="Miyake S."/>
            <person name="Morris K."/>
            <person name="Mottagui-Tabar S."/>
            <person name="Mulder N."/>
            <person name="Nakano N."/>
            <person name="Nakauchi H."/>
            <person name="Ng P."/>
            <person name="Nilsson R."/>
            <person name="Nishiguchi S."/>
            <person name="Nishikawa S."/>
            <person name="Nori F."/>
            <person name="Ohara O."/>
            <person name="Okazaki Y."/>
            <person name="Orlando V."/>
            <person name="Pang K.C."/>
            <person name="Pavan W.J."/>
            <person name="Pavesi G."/>
            <person name="Pesole G."/>
            <person name="Petrovsky N."/>
            <person name="Piazza S."/>
            <person name="Reed J."/>
            <person name="Reid J.F."/>
            <person name="Ring B.Z."/>
            <person name="Ringwald M."/>
            <person name="Rost B."/>
            <person name="Ruan Y."/>
            <person name="Salzberg S.L."/>
            <person name="Sandelin A."/>
            <person name="Schneider C."/>
            <person name="Schoenbach C."/>
            <person name="Sekiguchi K."/>
            <person name="Semple C.A."/>
            <person name="Seno S."/>
            <person name="Sessa L."/>
            <person name="Sheng Y."/>
            <person name="Shibata Y."/>
            <person name="Shimada H."/>
            <person name="Shimada K."/>
            <person name="Silva D."/>
            <person name="Sinclair B."/>
            <person name="Sperling S."/>
            <person name="Stupka E."/>
            <person name="Sugiura K."/>
            <person name="Sultana R."/>
            <person name="Takenaka Y."/>
            <person name="Taki K."/>
            <person name="Tammoja K."/>
            <person name="Tan S.L."/>
            <person name="Tang S."/>
            <person name="Taylor M.S."/>
            <person name="Tegner J."/>
            <person name="Teichmann S.A."/>
            <person name="Ueda H.R."/>
            <person name="van Nimwegen E."/>
            <person name="Verardo R."/>
            <person name="Wei C.L."/>
            <person name="Yagi K."/>
            <person name="Yamanishi H."/>
            <person name="Zabarovsky E."/>
            <person name="Zhu S."/>
            <person name="Zimmer A."/>
            <person name="Hide W."/>
            <person name="Bult C."/>
            <person name="Grimmond S.M."/>
            <person name="Teasdale R.D."/>
            <person name="Liu E.T."/>
            <person name="Brusic V."/>
            <person name="Quackenbush J."/>
            <person name="Wahlestedt C."/>
            <person name="Mattick J.S."/>
            <person name="Hume D.A."/>
            <person name="Kai C."/>
            <person name="Sasaki D."/>
            <person name="Tomaru Y."/>
            <person name="Fukuda S."/>
            <person name="Kanamori-Katayama M."/>
            <person name="Suzuki M."/>
            <person name="Aoki J."/>
            <person name="Arakawa T."/>
            <person name="Iida J."/>
            <person name="Imamura K."/>
            <person name="Itoh M."/>
            <person name="Kato T."/>
            <person name="Kawaji H."/>
            <person name="Kawagashira N."/>
            <person name="Kawashima T."/>
            <person name="Kojima M."/>
            <person name="Kondo S."/>
            <person name="Konno H."/>
            <person name="Nakano K."/>
            <person name="Ninomiya N."/>
            <person name="Nishio T."/>
            <person name="Okada M."/>
            <person name="Plessy C."/>
            <person name="Shibata K."/>
            <person name="Shiraki T."/>
            <person name="Suzuki S."/>
            <person name="Tagami M."/>
            <person name="Waki K."/>
            <person name="Watahiki A."/>
            <person name="Okamura-Oho Y."/>
            <person name="Suzuki H."/>
            <person name="Kawai J."/>
            <person name="Hayashizaki Y."/>
        </authorList>
    </citation>
    <scope>NUCLEOTIDE SEQUENCE [LARGE SCALE MRNA]</scope>
    <source>
        <strain>BALB/cJ</strain>
        <strain>C57BL/6J</strain>
        <tissue>Bone marrow</tissue>
        <tissue>Head</tissue>
        <tissue>Kidney</tissue>
        <tissue>Pituitary</tissue>
    </source>
</reference>
<reference key="3">
    <citation type="journal article" date="2004" name="Genome Res.">
        <title>The status, quality, and expansion of the NIH full-length cDNA project: the Mammalian Gene Collection (MGC).</title>
        <authorList>
            <consortium name="The MGC Project Team"/>
        </authorList>
    </citation>
    <scope>NUCLEOTIDE SEQUENCE [LARGE SCALE MRNA]</scope>
    <source>
        <strain>C57BL/6J</strain>
        <tissue>Brain</tissue>
    </source>
</reference>
<reference key="4">
    <citation type="journal article" date="1998" name="Genomics">
        <title>The mouse transketolase (TKT) gene: cloning, characterization, and functional promoter analysis.</title>
        <authorList>
            <person name="Salamon C."/>
            <person name="Chervenak M."/>
            <person name="Piatigorsky J."/>
            <person name="Sax C.M."/>
        </authorList>
    </citation>
    <scope>NUCLEOTIDE SEQUENCE [GENOMIC DNA] OF 1-36</scope>
    <source>
        <strain>129/Sv</strain>
    </source>
</reference>
<reference key="5">
    <citation type="submission" date="1999-10" db="EMBL/GenBank/DDBJ databases">
        <title>Cloning new genes possibly associated with atrophy of murine thymus.</title>
        <authorList>
            <person name="Su H."/>
            <person name="He W."/>
            <person name="Li Y."/>
        </authorList>
    </citation>
    <scope>NUCLEOTIDE SEQUENCE [MRNA] OF 65-623</scope>
    <source>
        <strain>BALB/cJ</strain>
        <tissue>Thymus</tissue>
    </source>
</reference>
<reference key="6">
    <citation type="submission" date="2007-04" db="UniProtKB">
        <authorList>
            <person name="Lubec G."/>
            <person name="Klug S."/>
            <person name="Kang S.U."/>
        </authorList>
    </citation>
    <scope>PROTEIN SEQUENCE OF 175-204; 344-352; 382-395 AND 472-493</scope>
    <scope>IDENTIFICATION BY MASS SPECTROMETRY</scope>
    <source>
        <strain>C57BL/6J</strain>
        <tissue>Brain</tissue>
        <tissue>Hippocampus</tissue>
    </source>
</reference>
<reference key="7">
    <citation type="journal article" date="2005" name="Nat. Biotechnol.">
        <title>Immunoaffinity profiling of tyrosine phosphorylation in cancer cells.</title>
        <authorList>
            <person name="Rush J."/>
            <person name="Moritz A."/>
            <person name="Lee K.A."/>
            <person name="Guo A."/>
            <person name="Goss V.L."/>
            <person name="Spek E.J."/>
            <person name="Zhang H."/>
            <person name="Zha X.-M."/>
            <person name="Polakiewicz R.D."/>
            <person name="Comb M.J."/>
        </authorList>
    </citation>
    <scope>IDENTIFICATION BY MASS SPECTROMETRY [LARGE SCALE ANALYSIS]</scope>
</reference>
<reference key="8">
    <citation type="journal article" date="2008" name="J. Proteome Res.">
        <title>Large-scale identification and evolution indexing of tyrosine phosphorylation sites from murine brain.</title>
        <authorList>
            <person name="Ballif B.A."/>
            <person name="Carey G.R."/>
            <person name="Sunyaev S.R."/>
            <person name="Gygi S.P."/>
        </authorList>
    </citation>
    <scope>PHOSPHORYLATION [LARGE SCALE ANALYSIS] AT TYR-275</scope>
    <scope>IDENTIFICATION BY MASS SPECTROMETRY [LARGE SCALE ANALYSIS]</scope>
    <source>
        <tissue>Brain</tissue>
    </source>
</reference>
<reference key="9">
    <citation type="journal article" date="2010" name="Cell">
        <title>A tissue-specific atlas of mouse protein phosphorylation and expression.</title>
        <authorList>
            <person name="Huttlin E.L."/>
            <person name="Jedrychowski M.P."/>
            <person name="Elias J.E."/>
            <person name="Goswami T."/>
            <person name="Rad R."/>
            <person name="Beausoleil S.A."/>
            <person name="Villen J."/>
            <person name="Haas W."/>
            <person name="Sowa M.E."/>
            <person name="Gygi S.P."/>
        </authorList>
    </citation>
    <scope>PHOSPHORYLATION [LARGE SCALE ANALYSIS] AT THR-287</scope>
    <scope>IDENTIFICATION BY MASS SPECTROMETRY [LARGE SCALE ANALYSIS]</scope>
    <source>
        <tissue>Brain</tissue>
        <tissue>Brown adipose tissue</tissue>
        <tissue>Heart</tissue>
        <tissue>Kidney</tissue>
        <tissue>Liver</tissue>
        <tissue>Lung</tissue>
        <tissue>Pancreas</tissue>
        <tissue>Spleen</tissue>
        <tissue>Testis</tissue>
    </source>
</reference>
<reference key="10">
    <citation type="journal article" date="2013" name="Mol. Cell">
        <title>SIRT5-mediated lysine desuccinylation impacts diverse metabolic pathways.</title>
        <authorList>
            <person name="Park J."/>
            <person name="Chen Y."/>
            <person name="Tishkoff D.X."/>
            <person name="Peng C."/>
            <person name="Tan M."/>
            <person name="Dai L."/>
            <person name="Xie Z."/>
            <person name="Zhang Y."/>
            <person name="Zwaans B.M."/>
            <person name="Skinner M.E."/>
            <person name="Lombard D.B."/>
            <person name="Zhao Y."/>
        </authorList>
    </citation>
    <scope>ACETYLATION [LARGE SCALE ANALYSIS] AT MET-1; LYS-6; LYS-232 AND LYS-538</scope>
    <scope>IDENTIFICATION BY MASS SPECTROMETRY [LARGE SCALE ANALYSIS]</scope>
    <source>
        <tissue>Embryonic fibroblast</tissue>
    </source>
</reference>
<gene>
    <name type="primary">Tkt</name>
</gene>
<feature type="chain" id="PRO_0000191896" description="Transketolase">
    <location>
        <begin position="1"/>
        <end position="623"/>
    </location>
</feature>
<feature type="active site" description="Proton donor" evidence="1">
    <location>
        <position position="366"/>
    </location>
</feature>
<feature type="binding site" evidence="1">
    <location>
        <position position="37"/>
    </location>
    <ligand>
        <name>substrate</name>
    </ligand>
</feature>
<feature type="binding site" evidence="1">
    <location>
        <position position="40"/>
    </location>
    <ligand>
        <name>thiamine diphosphate</name>
        <dbReference type="ChEBI" id="CHEBI:58937"/>
    </ligand>
</feature>
<feature type="binding site" evidence="1">
    <location>
        <position position="77"/>
    </location>
    <ligand>
        <name>thiamine diphosphate</name>
        <dbReference type="ChEBI" id="CHEBI:58937"/>
    </ligand>
</feature>
<feature type="binding site" evidence="1">
    <location>
        <begin position="123"/>
        <end position="125"/>
    </location>
    <ligand>
        <name>thiamine diphosphate</name>
        <dbReference type="ChEBI" id="CHEBI:58937"/>
    </ligand>
</feature>
<feature type="binding site" evidence="1">
    <location>
        <position position="155"/>
    </location>
    <ligand>
        <name>Mg(2+)</name>
        <dbReference type="ChEBI" id="CHEBI:18420"/>
    </ligand>
</feature>
<feature type="binding site" evidence="1">
    <location>
        <position position="156"/>
    </location>
    <ligand>
        <name>thiamine diphosphate</name>
        <dbReference type="ChEBI" id="CHEBI:58937"/>
    </ligand>
</feature>
<feature type="binding site" evidence="1">
    <location>
        <position position="185"/>
    </location>
    <ligand>
        <name>Mg(2+)</name>
        <dbReference type="ChEBI" id="CHEBI:18420"/>
    </ligand>
</feature>
<feature type="binding site" evidence="1">
    <location>
        <position position="185"/>
    </location>
    <ligand>
        <name>thiamine diphosphate</name>
        <dbReference type="ChEBI" id="CHEBI:58937"/>
    </ligand>
</feature>
<feature type="binding site" evidence="1">
    <location>
        <position position="187"/>
    </location>
    <ligand>
        <name>Mg(2+)</name>
        <dbReference type="ChEBI" id="CHEBI:18420"/>
    </ligand>
</feature>
<feature type="binding site" evidence="1">
    <location>
        <position position="244"/>
    </location>
    <ligand>
        <name>thiamine diphosphate</name>
        <dbReference type="ChEBI" id="CHEBI:58937"/>
    </ligand>
</feature>
<feature type="binding site" evidence="1">
    <location>
        <position position="258"/>
    </location>
    <ligand>
        <name>substrate</name>
    </ligand>
</feature>
<feature type="binding site" evidence="1">
    <location>
        <position position="258"/>
    </location>
    <ligand>
        <name>thiamine diphosphate</name>
        <dbReference type="ChEBI" id="CHEBI:58937"/>
    </ligand>
</feature>
<feature type="binding site" evidence="1">
    <location>
        <position position="318"/>
    </location>
    <ligand>
        <name>substrate</name>
    </ligand>
</feature>
<feature type="binding site" evidence="1">
    <location>
        <position position="345"/>
    </location>
    <ligand>
        <name>substrate</name>
    </ligand>
</feature>
<feature type="binding site" evidence="1">
    <location>
        <position position="392"/>
    </location>
    <ligand>
        <name>thiamine diphosphate</name>
        <dbReference type="ChEBI" id="CHEBI:58937"/>
    </ligand>
</feature>
<feature type="binding site" evidence="1">
    <location>
        <position position="416"/>
    </location>
    <ligand>
        <name>substrate</name>
    </ligand>
</feature>
<feature type="binding site" evidence="1">
    <location>
        <position position="424"/>
    </location>
    <ligand>
        <name>substrate</name>
    </ligand>
</feature>
<feature type="binding site" evidence="1">
    <location>
        <position position="428"/>
    </location>
    <ligand>
        <name>thiamine diphosphate</name>
        <dbReference type="ChEBI" id="CHEBI:58937"/>
    </ligand>
</feature>
<feature type="binding site" evidence="1">
    <location>
        <position position="474"/>
    </location>
    <ligand>
        <name>substrate</name>
    </ligand>
</feature>
<feature type="site" description="Important for catalytic activity" evidence="1">
    <location>
        <position position="37"/>
    </location>
</feature>
<feature type="site" description="Important for catalytic activity" evidence="1">
    <location>
        <position position="258"/>
    </location>
</feature>
<feature type="modified residue" description="N-acetylmethionine" evidence="7">
    <location>
        <position position="1"/>
    </location>
</feature>
<feature type="modified residue" description="N6-acetyllysine" evidence="7">
    <location>
        <position position="6"/>
    </location>
</feature>
<feature type="modified residue" description="N6-acetyllysine" evidence="2">
    <location>
        <position position="11"/>
    </location>
</feature>
<feature type="modified residue" description="Phosphoserine" evidence="2">
    <location>
        <position position="104"/>
    </location>
</feature>
<feature type="modified residue" description="N6-acetyllysine" evidence="2">
    <location>
        <position position="144"/>
    </location>
</feature>
<feature type="modified residue" description="N6-acetyllysine" evidence="2">
    <location>
        <position position="204"/>
    </location>
</feature>
<feature type="modified residue" description="N6-acetyllysine" evidence="7">
    <location>
        <position position="232"/>
    </location>
</feature>
<feature type="modified residue" description="N6-acetyllysine" evidence="2">
    <location>
        <position position="241"/>
    </location>
</feature>
<feature type="modified residue" description="N6-acetyllysine" evidence="2">
    <location>
        <position position="260"/>
    </location>
</feature>
<feature type="modified residue" description="Phosphotyrosine" evidence="5">
    <location>
        <position position="275"/>
    </location>
</feature>
<feature type="modified residue" description="Phosphothreonine" evidence="6">
    <location>
        <position position="287"/>
    </location>
</feature>
<feature type="modified residue" description="Phosphoserine" evidence="2">
    <location>
        <position position="295"/>
    </location>
</feature>
<feature type="modified residue" description="Phosphoserine" evidence="3">
    <location>
        <position position="345"/>
    </location>
</feature>
<feature type="modified residue" description="N6-acetyllysine" evidence="7">
    <location>
        <position position="538"/>
    </location>
</feature>
<feature type="modified residue" description="N6-acetyllysine" evidence="2">
    <location>
        <position position="603"/>
    </location>
</feature>
<feature type="cross-link" description="Glycyl lysine isopeptide (Lys-Gly) (interchain with G-Cter in SUMO2)" evidence="2">
    <location>
        <position position="352"/>
    </location>
</feature>
<feature type="sequence conflict" description="In Ref. 2; BAE26940." evidence="4" ref="2">
    <original>R</original>
    <variation>G</variation>
    <location>
        <position position="555"/>
    </location>
</feature>
<name>TKT_MOUSE</name>
<keyword id="KW-0007">Acetylation</keyword>
<keyword id="KW-0106">Calcium</keyword>
<keyword id="KW-0903">Direct protein sequencing</keyword>
<keyword id="KW-1017">Isopeptide bond</keyword>
<keyword id="KW-0460">Magnesium</keyword>
<keyword id="KW-0479">Metal-binding</keyword>
<keyword id="KW-0597">Phosphoprotein</keyword>
<keyword id="KW-1185">Reference proteome</keyword>
<keyword id="KW-0786">Thiamine pyrophosphate</keyword>
<keyword id="KW-0808">Transferase</keyword>
<keyword id="KW-0832">Ubl conjugation</keyword>